<geneLocation type="chloroplast"/>
<accession>Q33113</accession>
<keyword id="KW-0150">Chloroplast</keyword>
<keyword id="KW-0472">Membrane</keyword>
<keyword id="KW-0520">NAD</keyword>
<keyword id="KW-0521">NADP</keyword>
<keyword id="KW-0934">Plastid</keyword>
<keyword id="KW-0618">Plastoquinone</keyword>
<keyword id="KW-0874">Quinone</keyword>
<keyword id="KW-1185">Reference proteome</keyword>
<keyword id="KW-0793">Thylakoid</keyword>
<keyword id="KW-1278">Translocase</keyword>
<keyword id="KW-0812">Transmembrane</keyword>
<keyword id="KW-1133">Transmembrane helix</keyword>
<keyword id="KW-0813">Transport</keyword>
<organism>
    <name type="scientific">Sesamum indicum</name>
    <name type="common">Oriental sesame</name>
    <name type="synonym">Sesamum orientale</name>
    <dbReference type="NCBI Taxonomy" id="4182"/>
    <lineage>
        <taxon>Eukaryota</taxon>
        <taxon>Viridiplantae</taxon>
        <taxon>Streptophyta</taxon>
        <taxon>Embryophyta</taxon>
        <taxon>Tracheophyta</taxon>
        <taxon>Spermatophyta</taxon>
        <taxon>Magnoliopsida</taxon>
        <taxon>eudicotyledons</taxon>
        <taxon>Gunneridae</taxon>
        <taxon>Pentapetalae</taxon>
        <taxon>asterids</taxon>
        <taxon>lamiids</taxon>
        <taxon>Lamiales</taxon>
        <taxon>Pedaliaceae</taxon>
        <taxon>Sesamum</taxon>
    </lineage>
</organism>
<sequence>GLLLFPTATKKLRRMWAFPSILLLSIVMIFSTXLSIQQINSSSIYQYVWSWTXDNDFSLEFGYLIDPLTSIMSMLXTTVGIMVLIYSDNYMAHDQGYLIFFAYMSFFSTSMLGLVTSSNLIQIYIFWELVGMCSYLLIGFWFTRPSAANACQKAFVTNRVGDFGLLLGILGFYWITGSFEFQDLFEIFNNLIYNNQVNSPFVTLCAALLFAGAVAKSAQFPLHVWLPDAMEGPTPISALIHAATMVAAGIFLVARLLPLFIVIPYIMNFISLIGIITVLLGATLALAQKDIKRGLAYSTMSQLXYMMLALGMGSYRSALFHLITHAYSKALLFLGSGSVIHSMETIVGYSPDKSQNMVLMGGLRKHVPITKTSFLLGTLSLCGIPPLACFWSKDEILNESWLYSPIFAIIAWATAGLTAFYMFRIYLLTFEGHLNVHFQNYSGNQNASLYSISLWGKGCSKRINKNFLLLKMNNNESSSFFSKNTYRSDENVRKRNRGRPFINIVDFYNQKSFSYPYESDNTMLFPLLVLVLFTLFVGILGIPFNQEGRDLDILSKWLAPSINLLHQKSEDSTDWYEFLKNAIFSVSIASFGIFLASXLYKPIYSSFKNFDLINLFVKTGPKRSRWDKIINILYXWSYXRAYIDTFYTTSXTGAIRGLAQLTDFFDRRVIDGITNGVGVMSFFV</sequence>
<reference key="1">
    <citation type="journal article" date="1995" name="Ann. Mo. Bot. Gard.">
        <title>Evidence for the polyphyly of the Scrophulariaceae based on chloroplast rbcL and ndhF sequences.</title>
        <authorList>
            <person name="Olmstead R.G."/>
            <person name="Reeves P.A."/>
        </authorList>
    </citation>
    <scope>NUCLEOTIDE SEQUENCE [GENOMIC DNA]</scope>
</reference>
<evidence type="ECO:0000250" key="1"/>
<evidence type="ECO:0000255" key="2"/>
<evidence type="ECO:0000305" key="3"/>
<dbReference type="EC" id="7.1.1.-"/>
<dbReference type="EMBL" id="L36413">
    <property type="protein sequence ID" value="AAA84650.1"/>
    <property type="molecule type" value="Genomic_DNA"/>
</dbReference>
<dbReference type="PIR" id="T13695">
    <property type="entry name" value="T13695"/>
</dbReference>
<dbReference type="Proteomes" id="UP000504604">
    <property type="component" value="Unplaced"/>
</dbReference>
<dbReference type="GO" id="GO:0009535">
    <property type="term" value="C:chloroplast thylakoid membrane"/>
    <property type="evidence" value="ECO:0007669"/>
    <property type="project" value="UniProtKB-SubCell"/>
</dbReference>
<dbReference type="GO" id="GO:0008137">
    <property type="term" value="F:NADH dehydrogenase (ubiquinone) activity"/>
    <property type="evidence" value="ECO:0007669"/>
    <property type="project" value="InterPro"/>
</dbReference>
<dbReference type="GO" id="GO:0048038">
    <property type="term" value="F:quinone binding"/>
    <property type="evidence" value="ECO:0007669"/>
    <property type="project" value="UniProtKB-KW"/>
</dbReference>
<dbReference type="GO" id="GO:0042773">
    <property type="term" value="P:ATP synthesis coupled electron transport"/>
    <property type="evidence" value="ECO:0007669"/>
    <property type="project" value="InterPro"/>
</dbReference>
<dbReference type="GO" id="GO:0015990">
    <property type="term" value="P:electron transport coupled proton transport"/>
    <property type="evidence" value="ECO:0007669"/>
    <property type="project" value="TreeGrafter"/>
</dbReference>
<dbReference type="InterPro" id="IPR002128">
    <property type="entry name" value="NADH_UbQ_OxRdtase_chlpt_su5_C"/>
</dbReference>
<dbReference type="InterPro" id="IPR018393">
    <property type="entry name" value="NADHpl_OxRdtase_5_subgr"/>
</dbReference>
<dbReference type="InterPro" id="IPR001750">
    <property type="entry name" value="ND/Mrp_TM"/>
</dbReference>
<dbReference type="InterPro" id="IPR003945">
    <property type="entry name" value="NU5C-like"/>
</dbReference>
<dbReference type="InterPro" id="IPR001516">
    <property type="entry name" value="Proton_antipo_N"/>
</dbReference>
<dbReference type="NCBIfam" id="TIGR01974">
    <property type="entry name" value="NDH_I_L"/>
    <property type="match status" value="1"/>
</dbReference>
<dbReference type="NCBIfam" id="NF005141">
    <property type="entry name" value="PRK06590.1"/>
    <property type="match status" value="1"/>
</dbReference>
<dbReference type="PANTHER" id="PTHR42829">
    <property type="entry name" value="NADH-UBIQUINONE OXIDOREDUCTASE CHAIN 5"/>
    <property type="match status" value="1"/>
</dbReference>
<dbReference type="PANTHER" id="PTHR42829:SF2">
    <property type="entry name" value="NADH-UBIQUINONE OXIDOREDUCTASE CHAIN 5"/>
    <property type="match status" value="1"/>
</dbReference>
<dbReference type="Pfam" id="PF01010">
    <property type="entry name" value="Proton_antipo_C"/>
    <property type="match status" value="1"/>
</dbReference>
<dbReference type="Pfam" id="PF00361">
    <property type="entry name" value="Proton_antipo_M"/>
    <property type="match status" value="1"/>
</dbReference>
<dbReference type="Pfam" id="PF00662">
    <property type="entry name" value="Proton_antipo_N"/>
    <property type="match status" value="1"/>
</dbReference>
<dbReference type="PRINTS" id="PR01434">
    <property type="entry name" value="NADHDHGNASE5"/>
</dbReference>
<dbReference type="PRINTS" id="PR01435">
    <property type="entry name" value="NPOXDRDTASE5"/>
</dbReference>
<name>NU5C_SESIN</name>
<feature type="chain" id="PRO_0000118202" description="NAD(P)H-quinone oxidoreductase subunit 5, chloroplastic">
    <location>
        <begin position="1" status="less than"/>
        <end position="684" status="greater than"/>
    </location>
</feature>
<feature type="transmembrane region" description="Helical" evidence="2">
    <location>
        <begin position="16"/>
        <end position="36"/>
    </location>
</feature>
<feature type="transmembrane region" description="Helical" evidence="2">
    <location>
        <begin position="65"/>
        <end position="85"/>
    </location>
</feature>
<feature type="transmembrane region" description="Helical" evidence="2">
    <location>
        <begin position="96"/>
        <end position="116"/>
    </location>
</feature>
<feature type="transmembrane region" description="Helical" evidence="2">
    <location>
        <begin position="123"/>
        <end position="143"/>
    </location>
</feature>
<feature type="transmembrane region" description="Helical" evidence="2">
    <location>
        <begin position="161"/>
        <end position="181"/>
    </location>
</feature>
<feature type="transmembrane region" description="Helical" evidence="2">
    <location>
        <begin position="206"/>
        <end position="226"/>
    </location>
</feature>
<feature type="transmembrane region" description="Helical" evidence="2">
    <location>
        <begin position="234"/>
        <end position="254"/>
    </location>
</feature>
<feature type="transmembrane region" description="Helical" evidence="2">
    <location>
        <begin position="256"/>
        <end position="276"/>
    </location>
</feature>
<feature type="transmembrane region" description="Helical" evidence="2">
    <location>
        <begin position="303"/>
        <end position="323"/>
    </location>
</feature>
<feature type="transmembrane region" description="Helical" evidence="2">
    <location>
        <begin position="330"/>
        <end position="350"/>
    </location>
</feature>
<feature type="transmembrane region" description="Helical" evidence="2">
    <location>
        <begin position="372"/>
        <end position="392"/>
    </location>
</feature>
<feature type="transmembrane region" description="Helical" evidence="2">
    <location>
        <begin position="401"/>
        <end position="421"/>
    </location>
</feature>
<feature type="transmembrane region" description="Helical" evidence="2">
    <location>
        <begin position="524"/>
        <end position="544"/>
    </location>
</feature>
<feature type="transmembrane region" description="Helical" evidence="2">
    <location>
        <begin position="583"/>
        <end position="603"/>
    </location>
</feature>
<feature type="non-terminal residue">
    <location>
        <position position="1"/>
    </location>
</feature>
<feature type="non-terminal residue">
    <location>
        <position position="684"/>
    </location>
</feature>
<gene>
    <name type="primary">ndhF</name>
</gene>
<comment type="function">
    <text evidence="1">NDH shuttles electrons from NAD(P)H:plastoquinone, via FMN and iron-sulfur (Fe-S) centers, to quinones in the photosynthetic chain and possibly in a chloroplast respiratory chain. The immediate electron acceptor for the enzyme in this species is believed to be plastoquinone. Couples the redox reaction to proton translocation, and thus conserves the redox energy in a proton gradient (By similarity).</text>
</comment>
<comment type="catalytic activity">
    <reaction>
        <text>a plastoquinone + NADH + (n+1) H(+)(in) = a plastoquinol + NAD(+) + n H(+)(out)</text>
        <dbReference type="Rhea" id="RHEA:42608"/>
        <dbReference type="Rhea" id="RHEA-COMP:9561"/>
        <dbReference type="Rhea" id="RHEA-COMP:9562"/>
        <dbReference type="ChEBI" id="CHEBI:15378"/>
        <dbReference type="ChEBI" id="CHEBI:17757"/>
        <dbReference type="ChEBI" id="CHEBI:57540"/>
        <dbReference type="ChEBI" id="CHEBI:57945"/>
        <dbReference type="ChEBI" id="CHEBI:62192"/>
    </reaction>
</comment>
<comment type="catalytic activity">
    <reaction>
        <text>a plastoquinone + NADPH + (n+1) H(+)(in) = a plastoquinol + NADP(+) + n H(+)(out)</text>
        <dbReference type="Rhea" id="RHEA:42612"/>
        <dbReference type="Rhea" id="RHEA-COMP:9561"/>
        <dbReference type="Rhea" id="RHEA-COMP:9562"/>
        <dbReference type="ChEBI" id="CHEBI:15378"/>
        <dbReference type="ChEBI" id="CHEBI:17757"/>
        <dbReference type="ChEBI" id="CHEBI:57783"/>
        <dbReference type="ChEBI" id="CHEBI:58349"/>
        <dbReference type="ChEBI" id="CHEBI:62192"/>
    </reaction>
</comment>
<comment type="subunit">
    <text evidence="1">NDH is composed of at least 16 different subunits, 5 of which are encoded in the nucleus.</text>
</comment>
<comment type="subcellular location">
    <subcellularLocation>
        <location evidence="1">Plastid</location>
        <location evidence="1">Chloroplast thylakoid membrane</location>
        <topology evidence="1">Multi-pass membrane protein</topology>
    </subcellularLocation>
</comment>
<comment type="similarity">
    <text evidence="3">Belongs to the complex I subunit 5 family.</text>
</comment>
<proteinExistence type="inferred from homology"/>
<protein>
    <recommendedName>
        <fullName>NAD(P)H-quinone oxidoreductase subunit 5, chloroplastic</fullName>
        <ecNumber>7.1.1.-</ecNumber>
    </recommendedName>
    <alternativeName>
        <fullName>NAD(P)H dehydrogenase subunit 5</fullName>
    </alternativeName>
    <alternativeName>
        <fullName>NADH-plastoquinone oxidoreductase subunit 5</fullName>
    </alternativeName>
</protein>